<feature type="chain" id="PRO_0000416490" description="Ribosome assembly protein 3">
    <location>
        <begin position="1"/>
        <end position="80"/>
    </location>
</feature>
<feature type="region of interest" description="Disordered" evidence="2">
    <location>
        <begin position="1"/>
        <end position="35"/>
    </location>
</feature>
<feature type="compositionally biased region" description="Basic and acidic residues" evidence="2">
    <location>
        <begin position="1"/>
        <end position="10"/>
    </location>
</feature>
<feature type="compositionally biased region" description="Polar residues" evidence="2">
    <location>
        <begin position="11"/>
        <end position="26"/>
    </location>
</feature>
<sequence>MATNDQKIDNKSTVSNMLENPMFQTFSKKETEKPSLSEYMEQLTSEFGEELDNLRQKEIFDHNKLQLLIESLRAGHKIYE</sequence>
<accession>G2TRL3</accession>
<gene>
    <name type="primary">rsa3</name>
    <name type="synonym">new7</name>
    <name type="ORF">SPAC6B12.19</name>
</gene>
<reference key="1">
    <citation type="journal article" date="2002" name="Nature">
        <title>The genome sequence of Schizosaccharomyces pombe.</title>
        <authorList>
            <person name="Wood V."/>
            <person name="Gwilliam R."/>
            <person name="Rajandream M.A."/>
            <person name="Lyne M.H."/>
            <person name="Lyne R."/>
            <person name="Stewart A."/>
            <person name="Sgouros J.G."/>
            <person name="Peat N."/>
            <person name="Hayles J."/>
            <person name="Baker S.G."/>
            <person name="Basham D."/>
            <person name="Bowman S."/>
            <person name="Brooks K."/>
            <person name="Brown D."/>
            <person name="Brown S."/>
            <person name="Chillingworth T."/>
            <person name="Churcher C.M."/>
            <person name="Collins M."/>
            <person name="Connor R."/>
            <person name="Cronin A."/>
            <person name="Davis P."/>
            <person name="Feltwell T."/>
            <person name="Fraser A."/>
            <person name="Gentles S."/>
            <person name="Goble A."/>
            <person name="Hamlin N."/>
            <person name="Harris D.E."/>
            <person name="Hidalgo J."/>
            <person name="Hodgson G."/>
            <person name="Holroyd S."/>
            <person name="Hornsby T."/>
            <person name="Howarth S."/>
            <person name="Huckle E.J."/>
            <person name="Hunt S."/>
            <person name="Jagels K."/>
            <person name="James K.D."/>
            <person name="Jones L."/>
            <person name="Jones M."/>
            <person name="Leather S."/>
            <person name="McDonald S."/>
            <person name="McLean J."/>
            <person name="Mooney P."/>
            <person name="Moule S."/>
            <person name="Mungall K.L."/>
            <person name="Murphy L.D."/>
            <person name="Niblett D."/>
            <person name="Odell C."/>
            <person name="Oliver K."/>
            <person name="O'Neil S."/>
            <person name="Pearson D."/>
            <person name="Quail M.A."/>
            <person name="Rabbinowitsch E."/>
            <person name="Rutherford K.M."/>
            <person name="Rutter S."/>
            <person name="Saunders D."/>
            <person name="Seeger K."/>
            <person name="Sharp S."/>
            <person name="Skelton J."/>
            <person name="Simmonds M.N."/>
            <person name="Squares R."/>
            <person name="Squares S."/>
            <person name="Stevens K."/>
            <person name="Taylor K."/>
            <person name="Taylor R.G."/>
            <person name="Tivey A."/>
            <person name="Walsh S.V."/>
            <person name="Warren T."/>
            <person name="Whitehead S."/>
            <person name="Woodward J.R."/>
            <person name="Volckaert G."/>
            <person name="Aert R."/>
            <person name="Robben J."/>
            <person name="Grymonprez B."/>
            <person name="Weltjens I."/>
            <person name="Vanstreels E."/>
            <person name="Rieger M."/>
            <person name="Schaefer M."/>
            <person name="Mueller-Auer S."/>
            <person name="Gabel C."/>
            <person name="Fuchs M."/>
            <person name="Duesterhoeft A."/>
            <person name="Fritzc C."/>
            <person name="Holzer E."/>
            <person name="Moestl D."/>
            <person name="Hilbert H."/>
            <person name="Borzym K."/>
            <person name="Langer I."/>
            <person name="Beck A."/>
            <person name="Lehrach H."/>
            <person name="Reinhardt R."/>
            <person name="Pohl T.M."/>
            <person name="Eger P."/>
            <person name="Zimmermann W."/>
            <person name="Wedler H."/>
            <person name="Wambutt R."/>
            <person name="Purnelle B."/>
            <person name="Goffeau A."/>
            <person name="Cadieu E."/>
            <person name="Dreano S."/>
            <person name="Gloux S."/>
            <person name="Lelaure V."/>
            <person name="Mottier S."/>
            <person name="Galibert F."/>
            <person name="Aves S.J."/>
            <person name="Xiang Z."/>
            <person name="Hunt C."/>
            <person name="Moore K."/>
            <person name="Hurst S.M."/>
            <person name="Lucas M."/>
            <person name="Rochet M."/>
            <person name="Gaillardin C."/>
            <person name="Tallada V.A."/>
            <person name="Garzon A."/>
            <person name="Thode G."/>
            <person name="Daga R.R."/>
            <person name="Cruzado L."/>
            <person name="Jimenez J."/>
            <person name="Sanchez M."/>
            <person name="del Rey F."/>
            <person name="Benito J."/>
            <person name="Dominguez A."/>
            <person name="Revuelta J.L."/>
            <person name="Moreno S."/>
            <person name="Armstrong J."/>
            <person name="Forsburg S.L."/>
            <person name="Cerutti L."/>
            <person name="Lowe T."/>
            <person name="McCombie W.R."/>
            <person name="Paulsen I."/>
            <person name="Potashkin J."/>
            <person name="Shpakovski G.V."/>
            <person name="Ussery D."/>
            <person name="Barrell B.G."/>
            <person name="Nurse P."/>
        </authorList>
    </citation>
    <scope>NUCLEOTIDE SEQUENCE [LARGE SCALE GENOMIC DNA]</scope>
    <source>
        <strain>972 / ATCC 24843</strain>
    </source>
</reference>
<reference key="2">
    <citation type="journal article" date="2011" name="Genetics">
        <title>Augmented annotation of the Schizosaccharomyces pombe genome reveals additional genes required for growth and viability.</title>
        <authorList>
            <person name="Bitton D.A."/>
            <person name="Wood V."/>
            <person name="Scutt P.J."/>
            <person name="Grallert A."/>
            <person name="Yates T."/>
            <person name="Smith D.L."/>
            <person name="Hagan I.M."/>
            <person name="Miller C.J."/>
        </authorList>
    </citation>
    <scope>IDENTIFICATION</scope>
</reference>
<protein>
    <recommendedName>
        <fullName>Ribosome assembly protein 3</fullName>
    </recommendedName>
</protein>
<evidence type="ECO:0000250" key="1"/>
<evidence type="ECO:0000256" key="2">
    <source>
        <dbReference type="SAM" id="MobiDB-lite"/>
    </source>
</evidence>
<evidence type="ECO:0000305" key="3"/>
<comment type="function">
    <text evidence="1">Required for efficient biogenesis of the 60S ribosomal subunit.</text>
</comment>
<comment type="subunit">
    <text evidence="1">Associates with nucleolar pre-ribosomal particles.</text>
</comment>
<comment type="subcellular location">
    <subcellularLocation>
        <location evidence="1">Nucleus</location>
        <location evidence="1">Nucleolus</location>
    </subcellularLocation>
</comment>
<comment type="similarity">
    <text evidence="3">Belongs to the RSA3 family.</text>
</comment>
<proteinExistence type="evidence at transcript level"/>
<dbReference type="EMBL" id="CU329670">
    <property type="protein sequence ID" value="CCD31318.1"/>
    <property type="molecule type" value="Genomic_DNA"/>
</dbReference>
<dbReference type="RefSeq" id="XP_004001773.1">
    <property type="nucleotide sequence ID" value="XM_004001724.1"/>
</dbReference>
<dbReference type="SMR" id="G2TRL3"/>
<dbReference type="STRING" id="284812.G2TRL3"/>
<dbReference type="PaxDb" id="4896-SPAC6B12.19.1"/>
<dbReference type="EnsemblFungi" id="SPAC6B12.19.1">
    <property type="protein sequence ID" value="SPAC6B12.19.1:pep"/>
    <property type="gene ID" value="SPAC6B12.19"/>
</dbReference>
<dbReference type="PomBase" id="SPAC6B12.19">
    <property type="gene designation" value="rsa3"/>
</dbReference>
<dbReference type="VEuPathDB" id="FungiDB:SPAC6B12.19"/>
<dbReference type="HOGENOM" id="CLU_186289_0_0_1"/>
<dbReference type="InParanoid" id="G2TRL3"/>
<dbReference type="PRO" id="PR:G2TRL3"/>
<dbReference type="Proteomes" id="UP000002485">
    <property type="component" value="Chromosome I"/>
</dbReference>
<dbReference type="GO" id="GO:0005730">
    <property type="term" value="C:nucleolus"/>
    <property type="evidence" value="ECO:0000266"/>
    <property type="project" value="PomBase"/>
</dbReference>
<dbReference type="GO" id="GO:0030687">
    <property type="term" value="C:preribosome, large subunit precursor"/>
    <property type="evidence" value="ECO:0000266"/>
    <property type="project" value="PomBase"/>
</dbReference>
<dbReference type="GO" id="GO:0180023">
    <property type="term" value="P:cytosolic large ribosomal subunit assembly"/>
    <property type="evidence" value="ECO:0000266"/>
    <property type="project" value="PomBase"/>
</dbReference>
<dbReference type="InterPro" id="IPR051898">
    <property type="entry name" value="Ribosome_Assembly_3"/>
</dbReference>
<dbReference type="InterPro" id="IPR028217">
    <property type="entry name" value="Rsa3_C"/>
</dbReference>
<dbReference type="PANTHER" id="PTHR28127">
    <property type="entry name" value="RIBOSOME ASSEMBLY PROTEIN 3"/>
    <property type="match status" value="1"/>
</dbReference>
<dbReference type="PANTHER" id="PTHR28127:SF1">
    <property type="entry name" value="RIBOSOME ASSEMBLY PROTEIN 3"/>
    <property type="match status" value="1"/>
</dbReference>
<dbReference type="Pfam" id="PF14615">
    <property type="entry name" value="Rsa3"/>
    <property type="match status" value="1"/>
</dbReference>
<keyword id="KW-0539">Nucleus</keyword>
<keyword id="KW-1185">Reference proteome</keyword>
<keyword id="KW-0687">Ribonucleoprotein</keyword>
<keyword id="KW-0690">Ribosome biogenesis</keyword>
<name>RSA3_SCHPO</name>
<organism>
    <name type="scientific">Schizosaccharomyces pombe (strain 972 / ATCC 24843)</name>
    <name type="common">Fission yeast</name>
    <dbReference type="NCBI Taxonomy" id="284812"/>
    <lineage>
        <taxon>Eukaryota</taxon>
        <taxon>Fungi</taxon>
        <taxon>Dikarya</taxon>
        <taxon>Ascomycota</taxon>
        <taxon>Taphrinomycotina</taxon>
        <taxon>Schizosaccharomycetes</taxon>
        <taxon>Schizosaccharomycetales</taxon>
        <taxon>Schizosaccharomycetaceae</taxon>
        <taxon>Schizosaccharomyces</taxon>
    </lineage>
</organism>